<comment type="function">
    <text evidence="2 4">S-adenosyl-L-methionine-dependent methyltransferase that catalyzes four methylations of the modified target histidine residue in translation elongation factor 2 (EF-2), to form an intermediate called diphthine methyl ester. The four successive methylation reactions represent the second step of diphthamide biosynthesis.</text>
</comment>
<comment type="catalytic activity">
    <reaction evidence="2">
        <text>2-[(3S)-amino-3-carboxypropyl]-L-histidyl-[translation elongation factor 2] + 4 S-adenosyl-L-methionine = diphthine methyl ester-[translation elongation factor 2] + 4 S-adenosyl-L-homocysteine + 3 H(+)</text>
        <dbReference type="Rhea" id="RHEA:42652"/>
        <dbReference type="Rhea" id="RHEA-COMP:9749"/>
        <dbReference type="Rhea" id="RHEA-COMP:10173"/>
        <dbReference type="ChEBI" id="CHEBI:15378"/>
        <dbReference type="ChEBI" id="CHEBI:57856"/>
        <dbReference type="ChEBI" id="CHEBI:59789"/>
        <dbReference type="ChEBI" id="CHEBI:73995"/>
        <dbReference type="ChEBI" id="CHEBI:79005"/>
        <dbReference type="EC" id="2.1.1.314"/>
    </reaction>
</comment>
<comment type="pathway">
    <text>Protein modification; peptidyl-diphthamide biosynthesis.</text>
</comment>
<comment type="developmental stage">
    <text evidence="5">The protein is expressed in embryos at 18.5 dpc.</text>
</comment>
<comment type="similarity">
    <text evidence="6">Belongs to the diphthine synthase family.</text>
</comment>
<protein>
    <recommendedName>
        <fullName>Diphthine methyl ester synthase</fullName>
        <ecNumber>2.1.1.314</ecNumber>
    </recommendedName>
    <alternativeName>
        <fullName>Diphthamide biosynthesis methyltransferase</fullName>
    </alternativeName>
</protein>
<name>DPH5_MOUSE</name>
<keyword id="KW-0489">Methyltransferase</keyword>
<keyword id="KW-0597">Phosphoprotein</keyword>
<keyword id="KW-1185">Reference proteome</keyword>
<keyword id="KW-0949">S-adenosyl-L-methionine</keyword>
<keyword id="KW-0808">Transferase</keyword>
<organism>
    <name type="scientific">Mus musculus</name>
    <name type="common">Mouse</name>
    <dbReference type="NCBI Taxonomy" id="10090"/>
    <lineage>
        <taxon>Eukaryota</taxon>
        <taxon>Metazoa</taxon>
        <taxon>Chordata</taxon>
        <taxon>Craniata</taxon>
        <taxon>Vertebrata</taxon>
        <taxon>Euteleostomi</taxon>
        <taxon>Mammalia</taxon>
        <taxon>Eutheria</taxon>
        <taxon>Euarchontoglires</taxon>
        <taxon>Glires</taxon>
        <taxon>Rodentia</taxon>
        <taxon>Myomorpha</taxon>
        <taxon>Muroidea</taxon>
        <taxon>Muridae</taxon>
        <taxon>Murinae</taxon>
        <taxon>Mus</taxon>
        <taxon>Mus</taxon>
    </lineage>
</organism>
<sequence>MLYLIGLGLGDAKDITVKGLEVVRRCSRVYLEAYTSVLTVGKEALEEFYGRKLILADREEVEQEADNIFKDADVSDVAFLVVGDPFGATTHSDLILRATKLGIPYQVIHNASIMNAVGCCGLQLYRFGETVSIVFWTDTWRPESFFDKVKRNRANGMHTLCLLDIKVKEQSLENLIRGRKIYEPPRYMSVNQAAQQLLEIVQNHRARGEEPAITEETLCVGLARVGAEDQKIAAGTLQQMCTVSLGEPLHSLVITGGNLHPLEMEMLSLFSIPESQSTDGL</sequence>
<dbReference type="EC" id="2.1.1.314"/>
<dbReference type="EMBL" id="AK010475">
    <property type="protein sequence ID" value="BAB26968.1"/>
    <property type="molecule type" value="mRNA"/>
</dbReference>
<dbReference type="EMBL" id="AC131113">
    <property type="status" value="NOT_ANNOTATED_CDS"/>
    <property type="molecule type" value="Genomic_DNA"/>
</dbReference>
<dbReference type="EMBL" id="CH466532">
    <property type="protein sequence ID" value="EDL12395.1"/>
    <property type="molecule type" value="Genomic_DNA"/>
</dbReference>
<dbReference type="EMBL" id="BC060372">
    <property type="protein sequence ID" value="AAH60372.1"/>
    <property type="molecule type" value="mRNA"/>
</dbReference>
<dbReference type="CCDS" id="CCDS17782.1"/>
<dbReference type="RefSeq" id="NP_081469.2">
    <property type="nucleotide sequence ID" value="NM_027193.2"/>
</dbReference>
<dbReference type="SMR" id="Q9CWQ0"/>
<dbReference type="FunCoup" id="Q9CWQ0">
    <property type="interactions" value="542"/>
</dbReference>
<dbReference type="STRING" id="10090.ENSMUSP00000043730"/>
<dbReference type="PhosphoSitePlus" id="Q9CWQ0"/>
<dbReference type="SwissPalm" id="Q9CWQ0"/>
<dbReference type="PaxDb" id="10090-ENSMUSP00000043730"/>
<dbReference type="PeptideAtlas" id="Q9CWQ0"/>
<dbReference type="ProteomicsDB" id="277382"/>
<dbReference type="Pumba" id="Q9CWQ0"/>
<dbReference type="Antibodypedia" id="33698">
    <property type="antibodies" value="27 antibodies from 8 providers"/>
</dbReference>
<dbReference type="DNASU" id="69740"/>
<dbReference type="Ensembl" id="ENSMUST00000043342.10">
    <property type="protein sequence ID" value="ENSMUSP00000043730.10"/>
    <property type="gene ID" value="ENSMUSG00000033554.18"/>
</dbReference>
<dbReference type="Ensembl" id="ENSMUST00000189799.7">
    <property type="protein sequence ID" value="ENSMUSP00000140958.2"/>
    <property type="gene ID" value="ENSMUSG00000033554.18"/>
</dbReference>
<dbReference type="GeneID" id="69740"/>
<dbReference type="KEGG" id="mmu:69740"/>
<dbReference type="UCSC" id="uc008rbs.1">
    <property type="organism name" value="mouse"/>
</dbReference>
<dbReference type="AGR" id="MGI:1916990"/>
<dbReference type="CTD" id="51611"/>
<dbReference type="MGI" id="MGI:1916990">
    <property type="gene designation" value="Dph5"/>
</dbReference>
<dbReference type="VEuPathDB" id="HostDB:ENSMUSG00000033554"/>
<dbReference type="eggNOG" id="KOG3123">
    <property type="taxonomic scope" value="Eukaryota"/>
</dbReference>
<dbReference type="GeneTree" id="ENSGT00390000010568"/>
<dbReference type="HOGENOM" id="CLU_066040_1_0_1"/>
<dbReference type="InParanoid" id="Q9CWQ0"/>
<dbReference type="OMA" id="HNASIMS"/>
<dbReference type="OrthoDB" id="2516at2759"/>
<dbReference type="PhylomeDB" id="Q9CWQ0"/>
<dbReference type="TreeFam" id="TF105603"/>
<dbReference type="Reactome" id="R-MMU-5358493">
    <property type="pathway name" value="Synthesis of diphthamide-EEF2"/>
</dbReference>
<dbReference type="UniPathway" id="UPA00559"/>
<dbReference type="BioGRID-ORCS" id="69740">
    <property type="hits" value="29 hits in 79 CRISPR screens"/>
</dbReference>
<dbReference type="ChiTaRS" id="Dph5">
    <property type="organism name" value="mouse"/>
</dbReference>
<dbReference type="PRO" id="PR:Q9CWQ0"/>
<dbReference type="Proteomes" id="UP000000589">
    <property type="component" value="Chromosome 3"/>
</dbReference>
<dbReference type="RNAct" id="Q9CWQ0">
    <property type="molecule type" value="protein"/>
</dbReference>
<dbReference type="Bgee" id="ENSMUSG00000033554">
    <property type="expression patterns" value="Expressed in paneth cell and 234 other cell types or tissues"/>
</dbReference>
<dbReference type="ExpressionAtlas" id="Q9CWQ0">
    <property type="expression patterns" value="baseline and differential"/>
</dbReference>
<dbReference type="GO" id="GO:0005829">
    <property type="term" value="C:cytosol"/>
    <property type="evidence" value="ECO:0000314"/>
    <property type="project" value="MGI"/>
</dbReference>
<dbReference type="GO" id="GO:0141133">
    <property type="term" value="F:diphthine methyl ester synthase activity"/>
    <property type="evidence" value="ECO:0007669"/>
    <property type="project" value="UniProtKB-EC"/>
</dbReference>
<dbReference type="GO" id="GO:0004164">
    <property type="term" value="F:diphthine synthase activity"/>
    <property type="evidence" value="ECO:0000314"/>
    <property type="project" value="MGI"/>
</dbReference>
<dbReference type="GO" id="GO:0032259">
    <property type="term" value="P:methylation"/>
    <property type="evidence" value="ECO:0007669"/>
    <property type="project" value="UniProtKB-KW"/>
</dbReference>
<dbReference type="GO" id="GO:0017183">
    <property type="term" value="P:protein histidyl modification to diphthamide"/>
    <property type="evidence" value="ECO:0000314"/>
    <property type="project" value="MGI"/>
</dbReference>
<dbReference type="CDD" id="cd11647">
    <property type="entry name" value="DHP5_DphB"/>
    <property type="match status" value="1"/>
</dbReference>
<dbReference type="FunFam" id="3.30.950.10:FF:000004">
    <property type="entry name" value="Diphthine synthase putative"/>
    <property type="match status" value="1"/>
</dbReference>
<dbReference type="FunFam" id="3.40.1010.10:FF:000004">
    <property type="entry name" value="Putative diphthine synthase"/>
    <property type="match status" value="1"/>
</dbReference>
<dbReference type="Gene3D" id="3.40.1010.10">
    <property type="entry name" value="Cobalt-precorrin-4 Transmethylase, Domain 1"/>
    <property type="match status" value="1"/>
</dbReference>
<dbReference type="Gene3D" id="3.30.950.10">
    <property type="entry name" value="Methyltransferase, Cobalt-precorrin-4 Transmethylase, Domain 2"/>
    <property type="match status" value="1"/>
</dbReference>
<dbReference type="HAMAP" id="MF_01084">
    <property type="entry name" value="Diphthine_synth"/>
    <property type="match status" value="1"/>
</dbReference>
<dbReference type="InterPro" id="IPR000878">
    <property type="entry name" value="4pyrrol_Mease"/>
</dbReference>
<dbReference type="InterPro" id="IPR035996">
    <property type="entry name" value="4pyrrol_Methylase_sf"/>
</dbReference>
<dbReference type="InterPro" id="IPR014777">
    <property type="entry name" value="4pyrrole_Mease_sub1"/>
</dbReference>
<dbReference type="InterPro" id="IPR014776">
    <property type="entry name" value="4pyrrole_Mease_sub2"/>
</dbReference>
<dbReference type="InterPro" id="IPR004551">
    <property type="entry name" value="Dphthn_synthase"/>
</dbReference>
<dbReference type="NCBIfam" id="TIGR00522">
    <property type="entry name" value="dph5"/>
    <property type="match status" value="1"/>
</dbReference>
<dbReference type="PANTHER" id="PTHR10882:SF0">
    <property type="entry name" value="DIPHTHINE METHYL ESTER SYNTHASE"/>
    <property type="match status" value="1"/>
</dbReference>
<dbReference type="PANTHER" id="PTHR10882">
    <property type="entry name" value="DIPHTHINE SYNTHASE"/>
    <property type="match status" value="1"/>
</dbReference>
<dbReference type="Pfam" id="PF00590">
    <property type="entry name" value="TP_methylase"/>
    <property type="match status" value="1"/>
</dbReference>
<dbReference type="PIRSF" id="PIRSF036432">
    <property type="entry name" value="Diphthine_synth"/>
    <property type="match status" value="1"/>
</dbReference>
<dbReference type="SUPFAM" id="SSF53790">
    <property type="entry name" value="Tetrapyrrole methylase"/>
    <property type="match status" value="1"/>
</dbReference>
<evidence type="ECO:0000250" key="1"/>
<evidence type="ECO:0000250" key="2">
    <source>
        <dbReference type="UniProtKB" id="P32469"/>
    </source>
</evidence>
<evidence type="ECO:0000250" key="3">
    <source>
        <dbReference type="UniProtKB" id="Q9H2P9"/>
    </source>
</evidence>
<evidence type="ECO:0000269" key="4">
    <source>
    </source>
</evidence>
<evidence type="ECO:0000269" key="5">
    <source>
    </source>
</evidence>
<evidence type="ECO:0000305" key="6"/>
<feature type="chain" id="PRO_0000156134" description="Diphthine methyl ester synthase">
    <location>
        <begin position="1"/>
        <end position="281"/>
    </location>
</feature>
<feature type="binding site" evidence="1">
    <location>
        <position position="9"/>
    </location>
    <ligand>
        <name>S-adenosyl-L-methionine</name>
        <dbReference type="ChEBI" id="CHEBI:59789"/>
    </ligand>
</feature>
<feature type="binding site" evidence="1">
    <location>
        <position position="84"/>
    </location>
    <ligand>
        <name>S-adenosyl-L-methionine</name>
        <dbReference type="ChEBI" id="CHEBI:59789"/>
    </ligand>
</feature>
<feature type="binding site" evidence="1">
    <location>
        <position position="87"/>
    </location>
    <ligand>
        <name>S-adenosyl-L-methionine</name>
        <dbReference type="ChEBI" id="CHEBI:59789"/>
    </ligand>
</feature>
<feature type="binding site" evidence="1">
    <location>
        <begin position="112"/>
        <end position="113"/>
    </location>
    <ligand>
        <name>S-adenosyl-L-methionine</name>
        <dbReference type="ChEBI" id="CHEBI:59789"/>
    </ligand>
</feature>
<feature type="binding site" evidence="1">
    <location>
        <position position="163"/>
    </location>
    <ligand>
        <name>S-adenosyl-L-methionine</name>
        <dbReference type="ChEBI" id="CHEBI:59789"/>
    </ligand>
</feature>
<feature type="binding site" evidence="1">
    <location>
        <position position="225"/>
    </location>
    <ligand>
        <name>S-adenosyl-L-methionine</name>
        <dbReference type="ChEBI" id="CHEBI:59789"/>
    </ligand>
</feature>
<feature type="binding site" evidence="1">
    <location>
        <position position="250"/>
    </location>
    <ligand>
        <name>S-adenosyl-L-methionine</name>
        <dbReference type="ChEBI" id="CHEBI:59789"/>
    </ligand>
</feature>
<feature type="modified residue" description="Phosphoserine" evidence="3">
    <location>
        <position position="171"/>
    </location>
</feature>
<feature type="mutagenesis site" description="Most homozygous embryos are non-viable and show craniofacial, ophthalmologic, cardiac, visceral, and hemopoietic abnormalities." evidence="5">
    <original>H</original>
    <variation>R</variation>
    <location>
        <position position="260"/>
    </location>
</feature>
<feature type="sequence conflict" description="In Ref. 1; BAB26968." evidence="6" ref="1">
    <original>T</original>
    <variation>K</variation>
    <location>
        <position position="16"/>
    </location>
</feature>
<gene>
    <name type="primary">Dph5</name>
</gene>
<accession>Q9CWQ0</accession>
<accession>Q6PAC5</accession>
<proteinExistence type="evidence at protein level"/>
<reference key="1">
    <citation type="journal article" date="2005" name="Science">
        <title>The transcriptional landscape of the mammalian genome.</title>
        <authorList>
            <person name="Carninci P."/>
            <person name="Kasukawa T."/>
            <person name="Katayama S."/>
            <person name="Gough J."/>
            <person name="Frith M.C."/>
            <person name="Maeda N."/>
            <person name="Oyama R."/>
            <person name="Ravasi T."/>
            <person name="Lenhard B."/>
            <person name="Wells C."/>
            <person name="Kodzius R."/>
            <person name="Shimokawa K."/>
            <person name="Bajic V.B."/>
            <person name="Brenner S.E."/>
            <person name="Batalov S."/>
            <person name="Forrest A.R."/>
            <person name="Zavolan M."/>
            <person name="Davis M.J."/>
            <person name="Wilming L.G."/>
            <person name="Aidinis V."/>
            <person name="Allen J.E."/>
            <person name="Ambesi-Impiombato A."/>
            <person name="Apweiler R."/>
            <person name="Aturaliya R.N."/>
            <person name="Bailey T.L."/>
            <person name="Bansal M."/>
            <person name="Baxter L."/>
            <person name="Beisel K.W."/>
            <person name="Bersano T."/>
            <person name="Bono H."/>
            <person name="Chalk A.M."/>
            <person name="Chiu K.P."/>
            <person name="Choudhary V."/>
            <person name="Christoffels A."/>
            <person name="Clutterbuck D.R."/>
            <person name="Crowe M.L."/>
            <person name="Dalla E."/>
            <person name="Dalrymple B.P."/>
            <person name="de Bono B."/>
            <person name="Della Gatta G."/>
            <person name="di Bernardo D."/>
            <person name="Down T."/>
            <person name="Engstrom P."/>
            <person name="Fagiolini M."/>
            <person name="Faulkner G."/>
            <person name="Fletcher C.F."/>
            <person name="Fukushima T."/>
            <person name="Furuno M."/>
            <person name="Futaki S."/>
            <person name="Gariboldi M."/>
            <person name="Georgii-Hemming P."/>
            <person name="Gingeras T.R."/>
            <person name="Gojobori T."/>
            <person name="Green R.E."/>
            <person name="Gustincich S."/>
            <person name="Harbers M."/>
            <person name="Hayashi Y."/>
            <person name="Hensch T.K."/>
            <person name="Hirokawa N."/>
            <person name="Hill D."/>
            <person name="Huminiecki L."/>
            <person name="Iacono M."/>
            <person name="Ikeo K."/>
            <person name="Iwama A."/>
            <person name="Ishikawa T."/>
            <person name="Jakt M."/>
            <person name="Kanapin A."/>
            <person name="Katoh M."/>
            <person name="Kawasawa Y."/>
            <person name="Kelso J."/>
            <person name="Kitamura H."/>
            <person name="Kitano H."/>
            <person name="Kollias G."/>
            <person name="Krishnan S.P."/>
            <person name="Kruger A."/>
            <person name="Kummerfeld S.K."/>
            <person name="Kurochkin I.V."/>
            <person name="Lareau L.F."/>
            <person name="Lazarevic D."/>
            <person name="Lipovich L."/>
            <person name="Liu J."/>
            <person name="Liuni S."/>
            <person name="McWilliam S."/>
            <person name="Madan Babu M."/>
            <person name="Madera M."/>
            <person name="Marchionni L."/>
            <person name="Matsuda H."/>
            <person name="Matsuzawa S."/>
            <person name="Miki H."/>
            <person name="Mignone F."/>
            <person name="Miyake S."/>
            <person name="Morris K."/>
            <person name="Mottagui-Tabar S."/>
            <person name="Mulder N."/>
            <person name="Nakano N."/>
            <person name="Nakauchi H."/>
            <person name="Ng P."/>
            <person name="Nilsson R."/>
            <person name="Nishiguchi S."/>
            <person name="Nishikawa S."/>
            <person name="Nori F."/>
            <person name="Ohara O."/>
            <person name="Okazaki Y."/>
            <person name="Orlando V."/>
            <person name="Pang K.C."/>
            <person name="Pavan W.J."/>
            <person name="Pavesi G."/>
            <person name="Pesole G."/>
            <person name="Petrovsky N."/>
            <person name="Piazza S."/>
            <person name="Reed J."/>
            <person name="Reid J.F."/>
            <person name="Ring B.Z."/>
            <person name="Ringwald M."/>
            <person name="Rost B."/>
            <person name="Ruan Y."/>
            <person name="Salzberg S.L."/>
            <person name="Sandelin A."/>
            <person name="Schneider C."/>
            <person name="Schoenbach C."/>
            <person name="Sekiguchi K."/>
            <person name="Semple C.A."/>
            <person name="Seno S."/>
            <person name="Sessa L."/>
            <person name="Sheng Y."/>
            <person name="Shibata Y."/>
            <person name="Shimada H."/>
            <person name="Shimada K."/>
            <person name="Silva D."/>
            <person name="Sinclair B."/>
            <person name="Sperling S."/>
            <person name="Stupka E."/>
            <person name="Sugiura K."/>
            <person name="Sultana R."/>
            <person name="Takenaka Y."/>
            <person name="Taki K."/>
            <person name="Tammoja K."/>
            <person name="Tan S.L."/>
            <person name="Tang S."/>
            <person name="Taylor M.S."/>
            <person name="Tegner J."/>
            <person name="Teichmann S.A."/>
            <person name="Ueda H.R."/>
            <person name="van Nimwegen E."/>
            <person name="Verardo R."/>
            <person name="Wei C.L."/>
            <person name="Yagi K."/>
            <person name="Yamanishi H."/>
            <person name="Zabarovsky E."/>
            <person name="Zhu S."/>
            <person name="Zimmer A."/>
            <person name="Hide W."/>
            <person name="Bult C."/>
            <person name="Grimmond S.M."/>
            <person name="Teasdale R.D."/>
            <person name="Liu E.T."/>
            <person name="Brusic V."/>
            <person name="Quackenbush J."/>
            <person name="Wahlestedt C."/>
            <person name="Mattick J.S."/>
            <person name="Hume D.A."/>
            <person name="Kai C."/>
            <person name="Sasaki D."/>
            <person name="Tomaru Y."/>
            <person name="Fukuda S."/>
            <person name="Kanamori-Katayama M."/>
            <person name="Suzuki M."/>
            <person name="Aoki J."/>
            <person name="Arakawa T."/>
            <person name="Iida J."/>
            <person name="Imamura K."/>
            <person name="Itoh M."/>
            <person name="Kato T."/>
            <person name="Kawaji H."/>
            <person name="Kawagashira N."/>
            <person name="Kawashima T."/>
            <person name="Kojima M."/>
            <person name="Kondo S."/>
            <person name="Konno H."/>
            <person name="Nakano K."/>
            <person name="Ninomiya N."/>
            <person name="Nishio T."/>
            <person name="Okada M."/>
            <person name="Plessy C."/>
            <person name="Shibata K."/>
            <person name="Shiraki T."/>
            <person name="Suzuki S."/>
            <person name="Tagami M."/>
            <person name="Waki K."/>
            <person name="Watahiki A."/>
            <person name="Okamura-Oho Y."/>
            <person name="Suzuki H."/>
            <person name="Kawai J."/>
            <person name="Hayashizaki Y."/>
        </authorList>
    </citation>
    <scope>NUCLEOTIDE SEQUENCE [LARGE SCALE MRNA]</scope>
    <source>
        <strain>C57BL/6J</strain>
        <tissue>Embryonic stem cell</tissue>
    </source>
</reference>
<reference key="2">
    <citation type="journal article" date="2009" name="PLoS Biol.">
        <title>Lineage-specific biology revealed by a finished genome assembly of the mouse.</title>
        <authorList>
            <person name="Church D.M."/>
            <person name="Goodstadt L."/>
            <person name="Hillier L.W."/>
            <person name="Zody M.C."/>
            <person name="Goldstein S."/>
            <person name="She X."/>
            <person name="Bult C.J."/>
            <person name="Agarwala R."/>
            <person name="Cherry J.L."/>
            <person name="DiCuccio M."/>
            <person name="Hlavina W."/>
            <person name="Kapustin Y."/>
            <person name="Meric P."/>
            <person name="Maglott D."/>
            <person name="Birtle Z."/>
            <person name="Marques A.C."/>
            <person name="Graves T."/>
            <person name="Zhou S."/>
            <person name="Teague B."/>
            <person name="Potamousis K."/>
            <person name="Churas C."/>
            <person name="Place M."/>
            <person name="Herschleb J."/>
            <person name="Runnheim R."/>
            <person name="Forrest D."/>
            <person name="Amos-Landgraf J."/>
            <person name="Schwartz D.C."/>
            <person name="Cheng Z."/>
            <person name="Lindblad-Toh K."/>
            <person name="Eichler E.E."/>
            <person name="Ponting C.P."/>
        </authorList>
    </citation>
    <scope>NUCLEOTIDE SEQUENCE [LARGE SCALE GENOMIC DNA]</scope>
    <source>
        <strain>C57BL/6J</strain>
    </source>
</reference>
<reference key="3">
    <citation type="submission" date="2005-07" db="EMBL/GenBank/DDBJ databases">
        <authorList>
            <person name="Mural R.J."/>
            <person name="Adams M.D."/>
            <person name="Myers E.W."/>
            <person name="Smith H.O."/>
            <person name="Venter J.C."/>
        </authorList>
    </citation>
    <scope>NUCLEOTIDE SEQUENCE [LARGE SCALE GENOMIC DNA]</scope>
</reference>
<reference key="4">
    <citation type="journal article" date="2004" name="Genome Res.">
        <title>The status, quality, and expansion of the NIH full-length cDNA project: the Mammalian Gene Collection (MGC).</title>
        <authorList>
            <consortium name="The MGC Project Team"/>
        </authorList>
    </citation>
    <scope>NUCLEOTIDE SEQUENCE [LARGE SCALE MRNA]</scope>
    <source>
        <tissue>Olfactory epithelium</tissue>
    </source>
</reference>
<reference key="5">
    <citation type="journal article" date="2004" name="Mol. Cell. Biol.">
        <title>Identification of the proteins required for biosynthesis of diphthamide, the target of bacterial ADP-ribosylating toxins on translation elongation factor 2.</title>
        <authorList>
            <person name="Liu S."/>
            <person name="Milne G.T."/>
            <person name="Kuremsky J.G."/>
            <person name="Fink G.R."/>
            <person name="Leppla S.H."/>
        </authorList>
    </citation>
    <scope>FUNCTION</scope>
</reference>
<reference key="6">
    <citation type="journal article" date="2010" name="Cell">
        <title>A tissue-specific atlas of mouse protein phosphorylation and expression.</title>
        <authorList>
            <person name="Huttlin E.L."/>
            <person name="Jedrychowski M.P."/>
            <person name="Elias J.E."/>
            <person name="Goswami T."/>
            <person name="Rad R."/>
            <person name="Beausoleil S.A."/>
            <person name="Villen J."/>
            <person name="Haas W."/>
            <person name="Sowa M.E."/>
            <person name="Gygi S.P."/>
        </authorList>
    </citation>
    <scope>IDENTIFICATION BY MASS SPECTROMETRY [LARGE SCALE ANALYSIS]</scope>
    <source>
        <tissue>Brown adipose tissue</tissue>
        <tissue>Liver</tissue>
        <tissue>Pancreas</tissue>
        <tissue>Spleen</tissue>
    </source>
</reference>
<reference key="7">
    <citation type="journal article" date="2022" name="Genet. Med.">
        <title>A novel DPH5-related diphthamide-deficiency syndrome causing embryonic lethality or profound neurodevelopmental disorder.</title>
        <authorList>
            <consortium name="Undiagnosed Diseases Network"/>
            <person name="Shankar S.P."/>
            <person name="Grimsrud K."/>
            <person name="Lanoue L."/>
            <person name="Egense A."/>
            <person name="Willis B."/>
            <person name="Hoerberg J."/>
            <person name="AlAbdi L."/>
            <person name="Mayer K."/>
            <person name="Uetkuer K."/>
            <person name="Monaghan K.G."/>
            <person name="Krier J."/>
            <person name="Stoler J."/>
            <person name="Alnemer M."/>
            <person name="Shankar P.R."/>
            <person name="Schaffrath R."/>
            <person name="Alkuraya F.S."/>
            <person name="Brinkmann U."/>
            <person name="Eriksson L.A."/>
            <person name="Lloyd K."/>
            <person name="Rauen K.A."/>
        </authorList>
    </citation>
    <scope>MUTAGENESIS OF HIS-260</scope>
    <scope>DEVELOPMENTAL STAGE</scope>
</reference>
<reference key="8">
    <citation type="journal article" date="2022" name="Genet. Med.">
        <authorList>
            <consortium name="Undiagnosed Diseases Network"/>
            <person name="Shankar S.P."/>
            <person name="Grimsrud K."/>
            <person name="Lanoue L."/>
            <person name="Egense A."/>
            <person name="Willis B."/>
            <person name="Hoerberg J."/>
            <person name="AlAbdi L."/>
            <person name="Mayer K."/>
            <person name="Uetkuer K."/>
            <person name="Monaghan K.G."/>
            <person name="Krier J."/>
            <person name="Stoler J."/>
            <person name="Alnemer M."/>
            <person name="Shankar P.R."/>
            <person name="Schaffrath R."/>
            <person name="Alkuraya F.S."/>
            <person name="Brinkmann U."/>
            <person name="Eriksson L.A."/>
            <person name="Lloyd K."/>
            <person name="Rauen K.A."/>
        </authorList>
    </citation>
    <scope>ERRATUM OF PUBMED:35482014</scope>
</reference>